<proteinExistence type="evidence at protein level"/>
<accession>Q9CPS8</accession>
<keyword id="KW-1003">Cell membrane</keyword>
<keyword id="KW-0449">Lipoprotein</keyword>
<keyword id="KW-0472">Membrane</keyword>
<keyword id="KW-0519">Myristate</keyword>
<keyword id="KW-0564">Palmitate</keyword>
<keyword id="KW-0597">Phosphoprotein</keyword>
<keyword id="KW-1185">Reference proteome</keyword>
<sequence length="106" mass="11926">MGCMKSKETFPFPTTLDIDKLHESEEAFIPDDSSQYRTPSPGEQQQVQEVKKLPEPGAVIGALILEFADRLASEIVEDALQQWACENIQYYNIPYIESEGSDTTIN</sequence>
<organism>
    <name type="scientific">Mus musculus</name>
    <name type="common">Mouse</name>
    <dbReference type="NCBI Taxonomy" id="10090"/>
    <lineage>
        <taxon>Eukaryota</taxon>
        <taxon>Metazoa</taxon>
        <taxon>Chordata</taxon>
        <taxon>Craniata</taxon>
        <taxon>Vertebrata</taxon>
        <taxon>Euteleostomi</taxon>
        <taxon>Mammalia</taxon>
        <taxon>Eutheria</taxon>
        <taxon>Euarchontoglires</taxon>
        <taxon>Glires</taxon>
        <taxon>Rodentia</taxon>
        <taxon>Myomorpha</taxon>
        <taxon>Muroidea</taxon>
        <taxon>Muridae</taxon>
        <taxon>Murinae</taxon>
        <taxon>Mus</taxon>
        <taxon>Mus</taxon>
    </lineage>
</organism>
<feature type="initiator methionine" description="Removed" evidence="3">
    <location>
        <position position="1"/>
    </location>
</feature>
<feature type="chain" id="PRO_0000348431" description="Small membrane A-kinase anchor protein">
    <location>
        <begin position="2"/>
        <end position="106"/>
    </location>
</feature>
<feature type="region of interest" description="PKA-RI-binding" evidence="1">
    <location>
        <begin position="62"/>
        <end position="85"/>
    </location>
</feature>
<feature type="modified residue" description="Phosphoserine" evidence="6">
    <location>
        <position position="40"/>
    </location>
</feature>
<feature type="modified residue" description="Phosphoserine" evidence="2">
    <location>
        <position position="98"/>
    </location>
</feature>
<feature type="lipid moiety-binding region" description="N-myristoyl glycine" evidence="3">
    <location>
        <position position="2"/>
    </location>
</feature>
<feature type="lipid moiety-binding region" description="S-palmitoyl cysteine" evidence="1">
    <location>
        <position position="3"/>
    </location>
</feature>
<protein>
    <recommendedName>
        <fullName>Small membrane A-kinase anchor protein</fullName>
        <shortName>Small membrane AKAP</shortName>
        <shortName>smAKAP</shortName>
    </recommendedName>
</protein>
<comment type="function">
    <text evidence="1">Binds to type I regulatory subunits of protein kinase A (PKA-RI) and may anchor/target them to the plasma membrane.</text>
</comment>
<comment type="subunit">
    <text evidence="1">Interacts with PKA type I regulatory subunits PRKAR1A and PRKAR1B. Also binds to type II regulatory subunits, but at a tenfold lower affinity (By similarity).</text>
</comment>
<comment type="subcellular location">
    <subcellularLocation>
        <location evidence="1">Cell membrane</location>
    </subcellularLocation>
</comment>
<comment type="tissue specificity">
    <text evidence="4">Widely expressed, with very low levels in spleen and liver.</text>
</comment>
<comment type="PTM">
    <text evidence="1">May be palmitoylated at Cys-3.</text>
</comment>
<comment type="similarity">
    <text evidence="5">Belongs to the small membrane AKAP family.</text>
</comment>
<reference key="1">
    <citation type="journal article" date="2005" name="Science">
        <title>The transcriptional landscape of the mammalian genome.</title>
        <authorList>
            <person name="Carninci P."/>
            <person name="Kasukawa T."/>
            <person name="Katayama S."/>
            <person name="Gough J."/>
            <person name="Frith M.C."/>
            <person name="Maeda N."/>
            <person name="Oyama R."/>
            <person name="Ravasi T."/>
            <person name="Lenhard B."/>
            <person name="Wells C."/>
            <person name="Kodzius R."/>
            <person name="Shimokawa K."/>
            <person name="Bajic V.B."/>
            <person name="Brenner S.E."/>
            <person name="Batalov S."/>
            <person name="Forrest A.R."/>
            <person name="Zavolan M."/>
            <person name="Davis M.J."/>
            <person name="Wilming L.G."/>
            <person name="Aidinis V."/>
            <person name="Allen J.E."/>
            <person name="Ambesi-Impiombato A."/>
            <person name="Apweiler R."/>
            <person name="Aturaliya R.N."/>
            <person name="Bailey T.L."/>
            <person name="Bansal M."/>
            <person name="Baxter L."/>
            <person name="Beisel K.W."/>
            <person name="Bersano T."/>
            <person name="Bono H."/>
            <person name="Chalk A.M."/>
            <person name="Chiu K.P."/>
            <person name="Choudhary V."/>
            <person name="Christoffels A."/>
            <person name="Clutterbuck D.R."/>
            <person name="Crowe M.L."/>
            <person name="Dalla E."/>
            <person name="Dalrymple B.P."/>
            <person name="de Bono B."/>
            <person name="Della Gatta G."/>
            <person name="di Bernardo D."/>
            <person name="Down T."/>
            <person name="Engstrom P."/>
            <person name="Fagiolini M."/>
            <person name="Faulkner G."/>
            <person name="Fletcher C.F."/>
            <person name="Fukushima T."/>
            <person name="Furuno M."/>
            <person name="Futaki S."/>
            <person name="Gariboldi M."/>
            <person name="Georgii-Hemming P."/>
            <person name="Gingeras T.R."/>
            <person name="Gojobori T."/>
            <person name="Green R.E."/>
            <person name="Gustincich S."/>
            <person name="Harbers M."/>
            <person name="Hayashi Y."/>
            <person name="Hensch T.K."/>
            <person name="Hirokawa N."/>
            <person name="Hill D."/>
            <person name="Huminiecki L."/>
            <person name="Iacono M."/>
            <person name="Ikeo K."/>
            <person name="Iwama A."/>
            <person name="Ishikawa T."/>
            <person name="Jakt M."/>
            <person name="Kanapin A."/>
            <person name="Katoh M."/>
            <person name="Kawasawa Y."/>
            <person name="Kelso J."/>
            <person name="Kitamura H."/>
            <person name="Kitano H."/>
            <person name="Kollias G."/>
            <person name="Krishnan S.P."/>
            <person name="Kruger A."/>
            <person name="Kummerfeld S.K."/>
            <person name="Kurochkin I.V."/>
            <person name="Lareau L.F."/>
            <person name="Lazarevic D."/>
            <person name="Lipovich L."/>
            <person name="Liu J."/>
            <person name="Liuni S."/>
            <person name="McWilliam S."/>
            <person name="Madan Babu M."/>
            <person name="Madera M."/>
            <person name="Marchionni L."/>
            <person name="Matsuda H."/>
            <person name="Matsuzawa S."/>
            <person name="Miki H."/>
            <person name="Mignone F."/>
            <person name="Miyake S."/>
            <person name="Morris K."/>
            <person name="Mottagui-Tabar S."/>
            <person name="Mulder N."/>
            <person name="Nakano N."/>
            <person name="Nakauchi H."/>
            <person name="Ng P."/>
            <person name="Nilsson R."/>
            <person name="Nishiguchi S."/>
            <person name="Nishikawa S."/>
            <person name="Nori F."/>
            <person name="Ohara O."/>
            <person name="Okazaki Y."/>
            <person name="Orlando V."/>
            <person name="Pang K.C."/>
            <person name="Pavan W.J."/>
            <person name="Pavesi G."/>
            <person name="Pesole G."/>
            <person name="Petrovsky N."/>
            <person name="Piazza S."/>
            <person name="Reed J."/>
            <person name="Reid J.F."/>
            <person name="Ring B.Z."/>
            <person name="Ringwald M."/>
            <person name="Rost B."/>
            <person name="Ruan Y."/>
            <person name="Salzberg S.L."/>
            <person name="Sandelin A."/>
            <person name="Schneider C."/>
            <person name="Schoenbach C."/>
            <person name="Sekiguchi K."/>
            <person name="Semple C.A."/>
            <person name="Seno S."/>
            <person name="Sessa L."/>
            <person name="Sheng Y."/>
            <person name="Shibata Y."/>
            <person name="Shimada H."/>
            <person name="Shimada K."/>
            <person name="Silva D."/>
            <person name="Sinclair B."/>
            <person name="Sperling S."/>
            <person name="Stupka E."/>
            <person name="Sugiura K."/>
            <person name="Sultana R."/>
            <person name="Takenaka Y."/>
            <person name="Taki K."/>
            <person name="Tammoja K."/>
            <person name="Tan S.L."/>
            <person name="Tang S."/>
            <person name="Taylor M.S."/>
            <person name="Tegner J."/>
            <person name="Teichmann S.A."/>
            <person name="Ueda H.R."/>
            <person name="van Nimwegen E."/>
            <person name="Verardo R."/>
            <person name="Wei C.L."/>
            <person name="Yagi K."/>
            <person name="Yamanishi H."/>
            <person name="Zabarovsky E."/>
            <person name="Zhu S."/>
            <person name="Zimmer A."/>
            <person name="Hide W."/>
            <person name="Bult C."/>
            <person name="Grimmond S.M."/>
            <person name="Teasdale R.D."/>
            <person name="Liu E.T."/>
            <person name="Brusic V."/>
            <person name="Quackenbush J."/>
            <person name="Wahlestedt C."/>
            <person name="Mattick J.S."/>
            <person name="Hume D.A."/>
            <person name="Kai C."/>
            <person name="Sasaki D."/>
            <person name="Tomaru Y."/>
            <person name="Fukuda S."/>
            <person name="Kanamori-Katayama M."/>
            <person name="Suzuki M."/>
            <person name="Aoki J."/>
            <person name="Arakawa T."/>
            <person name="Iida J."/>
            <person name="Imamura K."/>
            <person name="Itoh M."/>
            <person name="Kato T."/>
            <person name="Kawaji H."/>
            <person name="Kawagashira N."/>
            <person name="Kawashima T."/>
            <person name="Kojima M."/>
            <person name="Kondo S."/>
            <person name="Konno H."/>
            <person name="Nakano K."/>
            <person name="Ninomiya N."/>
            <person name="Nishio T."/>
            <person name="Okada M."/>
            <person name="Plessy C."/>
            <person name="Shibata K."/>
            <person name="Shiraki T."/>
            <person name="Suzuki S."/>
            <person name="Tagami M."/>
            <person name="Waki K."/>
            <person name="Watahiki A."/>
            <person name="Okamura-Oho Y."/>
            <person name="Suzuki H."/>
            <person name="Kawai J."/>
            <person name="Hayashizaki Y."/>
        </authorList>
    </citation>
    <scope>NUCLEOTIDE SEQUENCE [LARGE SCALE MRNA]</scope>
    <source>
        <strain>C57BL/6J</strain>
        <tissue>Testis</tissue>
    </source>
</reference>
<reference key="2">
    <citation type="journal article" date="2004" name="Genome Res.">
        <title>The status, quality, and expansion of the NIH full-length cDNA project: the Mammalian Gene Collection (MGC).</title>
        <authorList>
            <consortium name="The MGC Project Team"/>
        </authorList>
    </citation>
    <scope>NUCLEOTIDE SEQUENCE [LARGE SCALE MRNA]</scope>
    <source>
        <tissue>Testis</tissue>
    </source>
</reference>
<reference key="3">
    <citation type="journal article" date="2010" name="Cell">
        <title>A tissue-specific atlas of mouse protein phosphorylation and expression.</title>
        <authorList>
            <person name="Huttlin E.L."/>
            <person name="Jedrychowski M.P."/>
            <person name="Elias J.E."/>
            <person name="Goswami T."/>
            <person name="Rad R."/>
            <person name="Beausoleil S.A."/>
            <person name="Villen J."/>
            <person name="Haas W."/>
            <person name="Sowa M.E."/>
            <person name="Gygi S.P."/>
        </authorList>
    </citation>
    <scope>PHOSPHORYLATION [LARGE SCALE ANALYSIS] AT SER-40</scope>
    <scope>IDENTIFICATION BY MASS SPECTROMETRY [LARGE SCALE ANALYSIS]</scope>
    <source>
        <tissue>Brain</tissue>
        <tissue>Pancreas</tissue>
        <tissue>Testis</tissue>
    </source>
</reference>
<reference key="4">
    <citation type="journal article" date="2012" name="J. Biol. Chem.">
        <title>A small novel A-kinase anchoring protein (AKAP) that localizes specifically protein kinase A-regulatory subunit I (PKA-RI) to the plasma membrane.</title>
        <authorList>
            <person name="Burgers P.P."/>
            <person name="Ma Y."/>
            <person name="Margarucci L."/>
            <person name="Mackey M."/>
            <person name="van der Heyden M.A."/>
            <person name="Ellisman M."/>
            <person name="Scholten A."/>
            <person name="Taylor S.S."/>
            <person name="Heck A.J."/>
        </authorList>
    </citation>
    <scope>TISSUE SPECIFICITY</scope>
</reference>
<evidence type="ECO:0000250" key="1"/>
<evidence type="ECO:0000250" key="2">
    <source>
        <dbReference type="UniProtKB" id="Q9BSF0"/>
    </source>
</evidence>
<evidence type="ECO:0000255" key="3"/>
<evidence type="ECO:0000269" key="4">
    <source>
    </source>
</evidence>
<evidence type="ECO:0000305" key="5"/>
<evidence type="ECO:0007744" key="6">
    <source>
    </source>
</evidence>
<dbReference type="EMBL" id="AK006110">
    <property type="protein sequence ID" value="BAB24413.1"/>
    <property type="molecule type" value="mRNA"/>
</dbReference>
<dbReference type="EMBL" id="AK006523">
    <property type="protein sequence ID" value="BAB24632.1"/>
    <property type="molecule type" value="mRNA"/>
</dbReference>
<dbReference type="EMBL" id="AK010796">
    <property type="protein sequence ID" value="BAB27186.1"/>
    <property type="molecule type" value="mRNA"/>
</dbReference>
<dbReference type="EMBL" id="BC048645">
    <property type="protein sequence ID" value="AAH48645.1"/>
    <property type="molecule type" value="mRNA"/>
</dbReference>
<dbReference type="CCDS" id="CCDS14949.1"/>
<dbReference type="RefSeq" id="NP_001355203.1">
    <property type="nucleotide sequence ID" value="NM_001368274.1"/>
</dbReference>
<dbReference type="RefSeq" id="NP_001355205.1">
    <property type="nucleotide sequence ID" value="NM_001368276.1"/>
</dbReference>
<dbReference type="RefSeq" id="NP_001355206.1">
    <property type="nucleotide sequence ID" value="NM_001368277.1"/>
</dbReference>
<dbReference type="RefSeq" id="NP_001355207.1">
    <property type="nucleotide sequence ID" value="NM_001368278.1"/>
</dbReference>
<dbReference type="RefSeq" id="NP_001355208.1">
    <property type="nucleotide sequence ID" value="NM_001368279.1"/>
</dbReference>
<dbReference type="RefSeq" id="NP_001355209.1">
    <property type="nucleotide sequence ID" value="NM_001368280.1"/>
</dbReference>
<dbReference type="RefSeq" id="NP_001355210.1">
    <property type="nucleotide sequence ID" value="NM_001368281.1"/>
</dbReference>
<dbReference type="RefSeq" id="NP_659202.1">
    <property type="nucleotide sequence ID" value="NM_144953.3"/>
</dbReference>
<dbReference type="RefSeq" id="XP_006496261.1">
    <property type="nucleotide sequence ID" value="XM_006496198.3"/>
</dbReference>
<dbReference type="RefSeq" id="XP_006496262.1">
    <property type="nucleotide sequence ID" value="XM_006496199.3"/>
</dbReference>
<dbReference type="RefSeq" id="XP_006496263.1">
    <property type="nucleotide sequence ID" value="XM_006496200.3"/>
</dbReference>
<dbReference type="RefSeq" id="XP_006496264.1">
    <property type="nucleotide sequence ID" value="XM_006496201.3"/>
</dbReference>
<dbReference type="RefSeq" id="XP_011236868.1">
    <property type="nucleotide sequence ID" value="XM_011238566.2"/>
</dbReference>
<dbReference type="FunCoup" id="Q9CPS8">
    <property type="interactions" value="74"/>
</dbReference>
<dbReference type="STRING" id="10090.ENSMUSP00000055413"/>
<dbReference type="iPTMnet" id="Q9CPS8"/>
<dbReference type="PhosphoSitePlus" id="Q9CPS8"/>
<dbReference type="SwissPalm" id="Q9CPS8"/>
<dbReference type="PaxDb" id="10090-ENSMUSP00000055413"/>
<dbReference type="PeptideAtlas" id="Q9CPS8"/>
<dbReference type="Antibodypedia" id="62058">
    <property type="antibodies" value="61 antibodies from 12 providers"/>
</dbReference>
<dbReference type="DNASU" id="67080"/>
<dbReference type="Ensembl" id="ENSMUST00000050567.11">
    <property type="protein sequence ID" value="ENSMUSP00000055413.5"/>
    <property type="gene ID" value="ENSMUSG00000043629.13"/>
</dbReference>
<dbReference type="Ensembl" id="ENSMUST00000114492.8">
    <property type="protein sequence ID" value="ENSMUSP00000110136.2"/>
    <property type="gene ID" value="ENSMUSG00000043629.13"/>
</dbReference>
<dbReference type="Ensembl" id="ENSMUST00000114493.2">
    <property type="protein sequence ID" value="ENSMUSP00000110137.2"/>
    <property type="gene ID" value="ENSMUSG00000043629.13"/>
</dbReference>
<dbReference type="Ensembl" id="ENSMUST00000186266.2">
    <property type="protein sequence ID" value="ENSMUSP00000140273.2"/>
    <property type="gene ID" value="ENSMUSG00000043629.13"/>
</dbReference>
<dbReference type="Ensembl" id="ENSMUST00000190726.2">
    <property type="protein sequence ID" value="ENSMUSP00000140530.2"/>
    <property type="gene ID" value="ENSMUSG00000043629.13"/>
</dbReference>
<dbReference type="Ensembl" id="ENSMUST00000190831.7">
    <property type="protein sequence ID" value="ENSMUSP00000140160.2"/>
    <property type="gene ID" value="ENSMUSG00000043629.13"/>
</dbReference>
<dbReference type="Ensembl" id="ENSMUST00000191441.2">
    <property type="protein sequence ID" value="ENSMUSP00000139750.2"/>
    <property type="gene ID" value="ENSMUSG00000043629.13"/>
</dbReference>
<dbReference type="GeneID" id="67080"/>
<dbReference type="KEGG" id="mmu:67080"/>
<dbReference type="UCSC" id="uc007ayr.1">
    <property type="organism name" value="mouse"/>
</dbReference>
<dbReference type="AGR" id="MGI:1914330"/>
<dbReference type="MGI" id="MGI:1914330">
    <property type="gene designation" value="1700019D03Rik"/>
</dbReference>
<dbReference type="VEuPathDB" id="HostDB:ENSMUSG00000043629"/>
<dbReference type="eggNOG" id="ENOG502S8S1">
    <property type="taxonomic scope" value="Eukaryota"/>
</dbReference>
<dbReference type="GeneTree" id="ENSGT00390000011537"/>
<dbReference type="HOGENOM" id="CLU_187810_0_0_1"/>
<dbReference type="InParanoid" id="Q9CPS8"/>
<dbReference type="OMA" id="TIERCEP"/>
<dbReference type="OrthoDB" id="8907307at2759"/>
<dbReference type="PhylomeDB" id="Q9CPS8"/>
<dbReference type="TreeFam" id="TF338355"/>
<dbReference type="BioGRID-ORCS" id="67080">
    <property type="hits" value="0 hits in 77 CRISPR screens"/>
</dbReference>
<dbReference type="PRO" id="PR:Q9CPS8"/>
<dbReference type="Proteomes" id="UP000000589">
    <property type="component" value="Chromosome 1"/>
</dbReference>
<dbReference type="RNAct" id="Q9CPS8">
    <property type="molecule type" value="protein"/>
</dbReference>
<dbReference type="Bgee" id="ENSMUSG00000043629">
    <property type="expression patterns" value="Expressed in seminiferous tubule of testis and 156 other cell types or tissues"/>
</dbReference>
<dbReference type="GO" id="GO:0005886">
    <property type="term" value="C:plasma membrane"/>
    <property type="evidence" value="ECO:0007669"/>
    <property type="project" value="UniProtKB-SubCell"/>
</dbReference>
<dbReference type="GO" id="GO:0034237">
    <property type="term" value="F:protein kinase A regulatory subunit binding"/>
    <property type="evidence" value="ECO:0007669"/>
    <property type="project" value="InterPro"/>
</dbReference>
<dbReference type="InterPro" id="IPR027969">
    <property type="entry name" value="Small_membr_AKAP"/>
</dbReference>
<dbReference type="PANTHER" id="PTHR36471">
    <property type="entry name" value="SMALL MEMBRANE A-KINASE ANCHOR PROTEIN"/>
    <property type="match status" value="1"/>
</dbReference>
<dbReference type="PANTHER" id="PTHR36471:SF1">
    <property type="entry name" value="SMALL MEMBRANE A-KINASE ANCHOR PROTEIN"/>
    <property type="match status" value="1"/>
</dbReference>
<dbReference type="Pfam" id="PF15127">
    <property type="entry name" value="SmAKAP"/>
    <property type="match status" value="1"/>
</dbReference>
<name>SMAKA_MOUSE</name>